<keyword id="KW-0997">Cell inner membrane</keyword>
<keyword id="KW-1003">Cell membrane</keyword>
<keyword id="KW-0406">Ion transport</keyword>
<keyword id="KW-0464">Manganese</keyword>
<keyword id="KW-0472">Membrane</keyword>
<keyword id="KW-0812">Transmembrane</keyword>
<keyword id="KW-1133">Transmembrane helix</keyword>
<keyword id="KW-0813">Transport</keyword>
<evidence type="ECO:0000255" key="1">
    <source>
        <dbReference type="HAMAP-Rule" id="MF_01521"/>
    </source>
</evidence>
<name>MNTP_ECO8A</name>
<gene>
    <name evidence="1" type="primary">mntP</name>
    <name type="synonym">yebN</name>
    <name type="ordered locus">ECIAI1_1891</name>
</gene>
<reference key="1">
    <citation type="journal article" date="2009" name="PLoS Genet.">
        <title>Organised genome dynamics in the Escherichia coli species results in highly diverse adaptive paths.</title>
        <authorList>
            <person name="Touchon M."/>
            <person name="Hoede C."/>
            <person name="Tenaillon O."/>
            <person name="Barbe V."/>
            <person name="Baeriswyl S."/>
            <person name="Bidet P."/>
            <person name="Bingen E."/>
            <person name="Bonacorsi S."/>
            <person name="Bouchier C."/>
            <person name="Bouvet O."/>
            <person name="Calteau A."/>
            <person name="Chiapello H."/>
            <person name="Clermont O."/>
            <person name="Cruveiller S."/>
            <person name="Danchin A."/>
            <person name="Diard M."/>
            <person name="Dossat C."/>
            <person name="Karoui M.E."/>
            <person name="Frapy E."/>
            <person name="Garry L."/>
            <person name="Ghigo J.M."/>
            <person name="Gilles A.M."/>
            <person name="Johnson J."/>
            <person name="Le Bouguenec C."/>
            <person name="Lescat M."/>
            <person name="Mangenot S."/>
            <person name="Martinez-Jehanne V."/>
            <person name="Matic I."/>
            <person name="Nassif X."/>
            <person name="Oztas S."/>
            <person name="Petit M.A."/>
            <person name="Pichon C."/>
            <person name="Rouy Z."/>
            <person name="Ruf C.S."/>
            <person name="Schneider D."/>
            <person name="Tourret J."/>
            <person name="Vacherie B."/>
            <person name="Vallenet D."/>
            <person name="Medigue C."/>
            <person name="Rocha E.P.C."/>
            <person name="Denamur E."/>
        </authorList>
    </citation>
    <scope>NUCLEOTIDE SEQUENCE [LARGE SCALE GENOMIC DNA]</scope>
    <source>
        <strain>IAI1</strain>
    </source>
</reference>
<protein>
    <recommendedName>
        <fullName evidence="1">Probable manganese efflux pump MntP</fullName>
    </recommendedName>
</protein>
<organism>
    <name type="scientific">Escherichia coli O8 (strain IAI1)</name>
    <dbReference type="NCBI Taxonomy" id="585034"/>
    <lineage>
        <taxon>Bacteria</taxon>
        <taxon>Pseudomonadati</taxon>
        <taxon>Pseudomonadota</taxon>
        <taxon>Gammaproteobacteria</taxon>
        <taxon>Enterobacterales</taxon>
        <taxon>Enterobacteriaceae</taxon>
        <taxon>Escherichia</taxon>
    </lineage>
</organism>
<comment type="function">
    <text evidence="1">Probably functions as a manganese efflux pump.</text>
</comment>
<comment type="subcellular location">
    <subcellularLocation>
        <location evidence="1">Cell inner membrane</location>
        <topology evidence="1">Multi-pass membrane protein</topology>
    </subcellularLocation>
</comment>
<comment type="similarity">
    <text evidence="1">Belongs to the MntP (TC 9.B.29) family.</text>
</comment>
<proteinExistence type="inferred from homology"/>
<dbReference type="EMBL" id="CU928160">
    <property type="protein sequence ID" value="CAQ98745.1"/>
    <property type="molecule type" value="Genomic_DNA"/>
</dbReference>
<dbReference type="RefSeq" id="WP_001296134.1">
    <property type="nucleotide sequence ID" value="NC_011741.1"/>
</dbReference>
<dbReference type="GeneID" id="93776070"/>
<dbReference type="KEGG" id="ecr:ECIAI1_1891"/>
<dbReference type="HOGENOM" id="CLU_096410_0_0_6"/>
<dbReference type="GO" id="GO:0005886">
    <property type="term" value="C:plasma membrane"/>
    <property type="evidence" value="ECO:0007669"/>
    <property type="project" value="UniProtKB-SubCell"/>
</dbReference>
<dbReference type="GO" id="GO:0005384">
    <property type="term" value="F:manganese ion transmembrane transporter activity"/>
    <property type="evidence" value="ECO:0007669"/>
    <property type="project" value="UniProtKB-UniRule"/>
</dbReference>
<dbReference type="HAMAP" id="MF_01521">
    <property type="entry name" value="MntP_pump"/>
    <property type="match status" value="1"/>
</dbReference>
<dbReference type="InterPro" id="IPR003810">
    <property type="entry name" value="Mntp/YtaF"/>
</dbReference>
<dbReference type="InterPro" id="IPR022929">
    <property type="entry name" value="Put_MntP"/>
</dbReference>
<dbReference type="NCBIfam" id="NF008546">
    <property type="entry name" value="PRK11469.1"/>
    <property type="match status" value="1"/>
</dbReference>
<dbReference type="PANTHER" id="PTHR35529">
    <property type="entry name" value="MANGANESE EFFLUX PUMP MNTP-RELATED"/>
    <property type="match status" value="1"/>
</dbReference>
<dbReference type="PANTHER" id="PTHR35529:SF1">
    <property type="entry name" value="MANGANESE EFFLUX PUMP MNTP-RELATED"/>
    <property type="match status" value="1"/>
</dbReference>
<dbReference type="Pfam" id="PF02659">
    <property type="entry name" value="Mntp"/>
    <property type="match status" value="1"/>
</dbReference>
<feature type="chain" id="PRO_1000200030" description="Probable manganese efflux pump MntP">
    <location>
        <begin position="1"/>
        <end position="188"/>
    </location>
</feature>
<feature type="transmembrane region" description="Helical" evidence="1">
    <location>
        <begin position="3"/>
        <end position="23"/>
    </location>
</feature>
<feature type="transmembrane region" description="Helical" evidence="1">
    <location>
        <begin position="66"/>
        <end position="86"/>
    </location>
</feature>
<feature type="transmembrane region" description="Helical" evidence="1">
    <location>
        <begin position="106"/>
        <end position="128"/>
    </location>
</feature>
<feature type="transmembrane region" description="Helical" evidence="1">
    <location>
        <begin position="143"/>
        <end position="163"/>
    </location>
</feature>
<feature type="transmembrane region" description="Helical" evidence="1">
    <location>
        <begin position="168"/>
        <end position="188"/>
    </location>
</feature>
<accession>B7M296</accession>
<sequence>MNITATVLLAFGMSMDAFAASIGKGATLHKPKFSEALRTGLIFGAVETLTPLIGWGMGMLASRFVLEWNHWIAFVLLIFLGGRMIIEGFRGADDEDEEPRRRHGFWLLVTTAIATSLDAMAVGVGLAFLQVNIIATALAIGCATLIMSTLGMMVGRFIGSIIGKKAEILGGLVLIGIGVQILWTHFHG</sequence>